<dbReference type="EC" id="1.1.3.37"/>
<dbReference type="EMBL" id="CU329670">
    <property type="protein sequence ID" value="CAC21485.1"/>
    <property type="molecule type" value="Genomic_DNA"/>
</dbReference>
<dbReference type="RefSeq" id="NP_593526.1">
    <property type="nucleotide sequence ID" value="NM_001018960.2"/>
</dbReference>
<dbReference type="SMR" id="Q9HDX8"/>
<dbReference type="BioGRID" id="279850">
    <property type="interactions" value="4"/>
</dbReference>
<dbReference type="FunCoup" id="Q9HDX8">
    <property type="interactions" value="463"/>
</dbReference>
<dbReference type="STRING" id="284812.Q9HDX8"/>
<dbReference type="iPTMnet" id="Q9HDX8"/>
<dbReference type="PaxDb" id="4896-SPAPB1A10.12c.1"/>
<dbReference type="EnsemblFungi" id="SPAPB1A10.12c.1">
    <property type="protein sequence ID" value="SPAPB1A10.12c.1:pep"/>
    <property type="gene ID" value="SPAPB1A10.12c"/>
</dbReference>
<dbReference type="GeneID" id="2543430"/>
<dbReference type="KEGG" id="spo:2543430"/>
<dbReference type="PomBase" id="SPAPB1A10.12c">
    <property type="gene designation" value="alo1"/>
</dbReference>
<dbReference type="VEuPathDB" id="FungiDB:SPAPB1A10.12c"/>
<dbReference type="eggNOG" id="KOG4730">
    <property type="taxonomic scope" value="Eukaryota"/>
</dbReference>
<dbReference type="HOGENOM" id="CLU_003896_4_1_1"/>
<dbReference type="InParanoid" id="Q9HDX8"/>
<dbReference type="OMA" id="YPRFGEF"/>
<dbReference type="PhylomeDB" id="Q9HDX8"/>
<dbReference type="UniPathway" id="UPA00771">
    <property type="reaction ID" value="UER00766"/>
</dbReference>
<dbReference type="PRO" id="PR:Q9HDX8"/>
<dbReference type="Proteomes" id="UP000002485">
    <property type="component" value="Chromosome I"/>
</dbReference>
<dbReference type="GO" id="GO:0005741">
    <property type="term" value="C:mitochondrial outer membrane"/>
    <property type="evidence" value="ECO:0000266"/>
    <property type="project" value="PomBase"/>
</dbReference>
<dbReference type="GO" id="GO:0005739">
    <property type="term" value="C:mitochondrion"/>
    <property type="evidence" value="ECO:0007005"/>
    <property type="project" value="PomBase"/>
</dbReference>
<dbReference type="GO" id="GO:0003885">
    <property type="term" value="F:D-arabinono-1,4-lactone oxidase activity"/>
    <property type="evidence" value="ECO:0000318"/>
    <property type="project" value="GO_Central"/>
</dbReference>
<dbReference type="GO" id="GO:0071949">
    <property type="term" value="F:FAD binding"/>
    <property type="evidence" value="ECO:0007669"/>
    <property type="project" value="InterPro"/>
</dbReference>
<dbReference type="GO" id="GO:0070485">
    <property type="term" value="P:dehydro-D-arabinono-1,4-lactone biosynthetic process"/>
    <property type="evidence" value="ECO:0000266"/>
    <property type="project" value="PomBase"/>
</dbReference>
<dbReference type="GO" id="GO:0006766">
    <property type="term" value="P:vitamin metabolic process"/>
    <property type="evidence" value="ECO:0000305"/>
    <property type="project" value="PomBase"/>
</dbReference>
<dbReference type="Gene3D" id="3.30.465.10">
    <property type="match status" value="1"/>
</dbReference>
<dbReference type="Gene3D" id="3.30.70.2520">
    <property type="match status" value="1"/>
</dbReference>
<dbReference type="Gene3D" id="3.30.43.10">
    <property type="entry name" value="Uridine Diphospho-n-acetylenolpyruvylglucosamine Reductase, domain 2"/>
    <property type="match status" value="1"/>
</dbReference>
<dbReference type="Gene3D" id="1.10.45.10">
    <property type="entry name" value="Vanillyl-alcohol Oxidase, Chain A, domain 4"/>
    <property type="match status" value="1"/>
</dbReference>
<dbReference type="InterPro" id="IPR007173">
    <property type="entry name" value="ALO_C"/>
</dbReference>
<dbReference type="InterPro" id="IPR016166">
    <property type="entry name" value="FAD-bd_PCMH"/>
</dbReference>
<dbReference type="InterPro" id="IPR036318">
    <property type="entry name" value="FAD-bd_PCMH-like_sf"/>
</dbReference>
<dbReference type="InterPro" id="IPR016167">
    <property type="entry name" value="FAD-bd_PCMH_sub1"/>
</dbReference>
<dbReference type="InterPro" id="IPR016169">
    <property type="entry name" value="FAD-bd_PCMH_sub2"/>
</dbReference>
<dbReference type="InterPro" id="IPR010031">
    <property type="entry name" value="FAD_lactone_oxidase-like"/>
</dbReference>
<dbReference type="InterPro" id="IPR006094">
    <property type="entry name" value="Oxid_FAD_bind_N"/>
</dbReference>
<dbReference type="InterPro" id="IPR030654">
    <property type="entry name" value="Sugar_lactone_oxidase"/>
</dbReference>
<dbReference type="InterPro" id="IPR016171">
    <property type="entry name" value="Vanillyl_alc_oxidase_C-sub2"/>
</dbReference>
<dbReference type="NCBIfam" id="TIGR01678">
    <property type="entry name" value="FAD_lactone_ox"/>
    <property type="match status" value="1"/>
</dbReference>
<dbReference type="PANTHER" id="PTHR43762:SF1">
    <property type="entry name" value="D-ARABINONO-1,4-LACTONE OXIDASE"/>
    <property type="match status" value="1"/>
</dbReference>
<dbReference type="PANTHER" id="PTHR43762">
    <property type="entry name" value="L-GULONOLACTONE OXIDASE"/>
    <property type="match status" value="1"/>
</dbReference>
<dbReference type="Pfam" id="PF04030">
    <property type="entry name" value="ALO"/>
    <property type="match status" value="1"/>
</dbReference>
<dbReference type="Pfam" id="PF01565">
    <property type="entry name" value="FAD_binding_4"/>
    <property type="match status" value="1"/>
</dbReference>
<dbReference type="PIRSF" id="PIRSF000136">
    <property type="entry name" value="LGO_GLO"/>
    <property type="match status" value="1"/>
</dbReference>
<dbReference type="SUPFAM" id="SSF56176">
    <property type="entry name" value="FAD-binding/transporter-associated domain-like"/>
    <property type="match status" value="1"/>
</dbReference>
<dbReference type="PROSITE" id="PS51387">
    <property type="entry name" value="FAD_PCMH"/>
    <property type="match status" value="1"/>
</dbReference>
<proteinExistence type="inferred from homology"/>
<accession>Q9HDX8</accession>
<comment type="catalytic activity">
    <reaction>
        <text>D-arabinono-1,4-lactone + O2 = dehydro-D-arabinono-1,4-lactone + H2O2 + H(+)</text>
        <dbReference type="Rhea" id="RHEA:23756"/>
        <dbReference type="ChEBI" id="CHEBI:15378"/>
        <dbReference type="ChEBI" id="CHEBI:15379"/>
        <dbReference type="ChEBI" id="CHEBI:16240"/>
        <dbReference type="ChEBI" id="CHEBI:16292"/>
        <dbReference type="ChEBI" id="CHEBI:58277"/>
        <dbReference type="EC" id="1.1.3.37"/>
    </reaction>
</comment>
<comment type="cofactor">
    <cofactor evidence="1">
        <name>FAD</name>
        <dbReference type="ChEBI" id="CHEBI:57692"/>
    </cofactor>
</comment>
<comment type="pathway">
    <text>Cofactor biosynthesis; D-erythroascorbate biosynthesis; dehydro-D-arabinono-1,4-lactone from D-arabinose: step 2/2.</text>
</comment>
<comment type="subcellular location">
    <subcellularLocation>
        <location evidence="1">Mitochondrion membrane</location>
    </subcellularLocation>
    <text evidence="1">Membrane-embedded.</text>
</comment>
<comment type="similarity">
    <text evidence="3">Belongs to the oxygen-dependent FAD-linked oxidoreductase family.</text>
</comment>
<sequence>MSIPHINKLSQDGRVRFSNWAKTFSAISLGLRCPKTEEQLREILVDANSNGKKIRVVGAGHSPSDIVCTSGYLLSLDKMNKVVSFDPDSLSITVQAGIRFYQVQEILQNLGYSLPIVGSISETSVSGIMSTCTHGSSLQHQVLPHYIKSMRIMLADGSIVTCSRELQKDMFAAAQVSLGALGVIVDITISVVPAFDLVATEDVTTVTDLFQDWKNNLIWESAEFVRVHVFPYANRAVVWRANKVEPNTVPHTPKPSLFRLKLDSFVYQCLLFVGKCVNRVTPYLERFWFKCHYGSKLGTALQVAGPGFDVLQMFCYFSQHVSEWGIPLESAPDALEKLINYTVDDAGKIGAYTHWPIEVRVCAPTPEDECWLSTDCKVPTCYIEAIMYRPFSTSINYKPYFKALEDIANQYNGKPHWAKEYSLTKEQLLERYPNLSKWLSLRKLLDPKGVFWNDYLQRHLG</sequence>
<name>ALO_SCHPO</name>
<organism>
    <name type="scientific">Schizosaccharomyces pombe (strain 972 / ATCC 24843)</name>
    <name type="common">Fission yeast</name>
    <dbReference type="NCBI Taxonomy" id="284812"/>
    <lineage>
        <taxon>Eukaryota</taxon>
        <taxon>Fungi</taxon>
        <taxon>Dikarya</taxon>
        <taxon>Ascomycota</taxon>
        <taxon>Taphrinomycotina</taxon>
        <taxon>Schizosaccharomycetes</taxon>
        <taxon>Schizosaccharomycetales</taxon>
        <taxon>Schizosaccharomycetaceae</taxon>
        <taxon>Schizosaccharomyces</taxon>
    </lineage>
</organism>
<feature type="chain" id="PRO_0000128169" description="D-arabinono-1,4-lactone oxidase">
    <location>
        <begin position="1"/>
        <end position="461"/>
    </location>
</feature>
<feature type="domain" description="FAD-binding PCMH-type" evidence="2">
    <location>
        <begin position="24"/>
        <end position="194"/>
    </location>
</feature>
<feature type="modified residue" description="Pros-8alpha-FAD histidine" evidence="1">
    <location>
        <position position="61"/>
    </location>
</feature>
<gene>
    <name type="primary">alo1</name>
    <name type="ORF">SPAPB1A10.12c</name>
</gene>
<keyword id="KW-0274">FAD</keyword>
<keyword id="KW-0285">Flavoprotein</keyword>
<keyword id="KW-0472">Membrane</keyword>
<keyword id="KW-0496">Mitochondrion</keyword>
<keyword id="KW-0560">Oxidoreductase</keyword>
<keyword id="KW-1185">Reference proteome</keyword>
<protein>
    <recommendedName>
        <fullName>D-arabinono-1,4-lactone oxidase</fullName>
        <shortName>ALO</shortName>
        <ecNumber>1.1.3.37</ecNumber>
    </recommendedName>
    <alternativeName>
        <fullName>L-galactono-gamma-lactone oxidase</fullName>
    </alternativeName>
</protein>
<evidence type="ECO:0000250" key="1"/>
<evidence type="ECO:0000255" key="2">
    <source>
        <dbReference type="PROSITE-ProRule" id="PRU00718"/>
    </source>
</evidence>
<evidence type="ECO:0000305" key="3"/>
<reference key="1">
    <citation type="journal article" date="2002" name="Nature">
        <title>The genome sequence of Schizosaccharomyces pombe.</title>
        <authorList>
            <person name="Wood V."/>
            <person name="Gwilliam R."/>
            <person name="Rajandream M.A."/>
            <person name="Lyne M.H."/>
            <person name="Lyne R."/>
            <person name="Stewart A."/>
            <person name="Sgouros J.G."/>
            <person name="Peat N."/>
            <person name="Hayles J."/>
            <person name="Baker S.G."/>
            <person name="Basham D."/>
            <person name="Bowman S."/>
            <person name="Brooks K."/>
            <person name="Brown D."/>
            <person name="Brown S."/>
            <person name="Chillingworth T."/>
            <person name="Churcher C.M."/>
            <person name="Collins M."/>
            <person name="Connor R."/>
            <person name="Cronin A."/>
            <person name="Davis P."/>
            <person name="Feltwell T."/>
            <person name="Fraser A."/>
            <person name="Gentles S."/>
            <person name="Goble A."/>
            <person name="Hamlin N."/>
            <person name="Harris D.E."/>
            <person name="Hidalgo J."/>
            <person name="Hodgson G."/>
            <person name="Holroyd S."/>
            <person name="Hornsby T."/>
            <person name="Howarth S."/>
            <person name="Huckle E.J."/>
            <person name="Hunt S."/>
            <person name="Jagels K."/>
            <person name="James K.D."/>
            <person name="Jones L."/>
            <person name="Jones M."/>
            <person name="Leather S."/>
            <person name="McDonald S."/>
            <person name="McLean J."/>
            <person name="Mooney P."/>
            <person name="Moule S."/>
            <person name="Mungall K.L."/>
            <person name="Murphy L.D."/>
            <person name="Niblett D."/>
            <person name="Odell C."/>
            <person name="Oliver K."/>
            <person name="O'Neil S."/>
            <person name="Pearson D."/>
            <person name="Quail M.A."/>
            <person name="Rabbinowitsch E."/>
            <person name="Rutherford K.M."/>
            <person name="Rutter S."/>
            <person name="Saunders D."/>
            <person name="Seeger K."/>
            <person name="Sharp S."/>
            <person name="Skelton J."/>
            <person name="Simmonds M.N."/>
            <person name="Squares R."/>
            <person name="Squares S."/>
            <person name="Stevens K."/>
            <person name="Taylor K."/>
            <person name="Taylor R.G."/>
            <person name="Tivey A."/>
            <person name="Walsh S.V."/>
            <person name="Warren T."/>
            <person name="Whitehead S."/>
            <person name="Woodward J.R."/>
            <person name="Volckaert G."/>
            <person name="Aert R."/>
            <person name="Robben J."/>
            <person name="Grymonprez B."/>
            <person name="Weltjens I."/>
            <person name="Vanstreels E."/>
            <person name="Rieger M."/>
            <person name="Schaefer M."/>
            <person name="Mueller-Auer S."/>
            <person name="Gabel C."/>
            <person name="Fuchs M."/>
            <person name="Duesterhoeft A."/>
            <person name="Fritzc C."/>
            <person name="Holzer E."/>
            <person name="Moestl D."/>
            <person name="Hilbert H."/>
            <person name="Borzym K."/>
            <person name="Langer I."/>
            <person name="Beck A."/>
            <person name="Lehrach H."/>
            <person name="Reinhardt R."/>
            <person name="Pohl T.M."/>
            <person name="Eger P."/>
            <person name="Zimmermann W."/>
            <person name="Wedler H."/>
            <person name="Wambutt R."/>
            <person name="Purnelle B."/>
            <person name="Goffeau A."/>
            <person name="Cadieu E."/>
            <person name="Dreano S."/>
            <person name="Gloux S."/>
            <person name="Lelaure V."/>
            <person name="Mottier S."/>
            <person name="Galibert F."/>
            <person name="Aves S.J."/>
            <person name="Xiang Z."/>
            <person name="Hunt C."/>
            <person name="Moore K."/>
            <person name="Hurst S.M."/>
            <person name="Lucas M."/>
            <person name="Rochet M."/>
            <person name="Gaillardin C."/>
            <person name="Tallada V.A."/>
            <person name="Garzon A."/>
            <person name="Thode G."/>
            <person name="Daga R.R."/>
            <person name="Cruzado L."/>
            <person name="Jimenez J."/>
            <person name="Sanchez M."/>
            <person name="del Rey F."/>
            <person name="Benito J."/>
            <person name="Dominguez A."/>
            <person name="Revuelta J.L."/>
            <person name="Moreno S."/>
            <person name="Armstrong J."/>
            <person name="Forsburg S.L."/>
            <person name="Cerutti L."/>
            <person name="Lowe T."/>
            <person name="McCombie W.R."/>
            <person name="Paulsen I."/>
            <person name="Potashkin J."/>
            <person name="Shpakovski G.V."/>
            <person name="Ussery D."/>
            <person name="Barrell B.G."/>
            <person name="Nurse P."/>
        </authorList>
    </citation>
    <scope>NUCLEOTIDE SEQUENCE [LARGE SCALE GENOMIC DNA]</scope>
    <source>
        <strain>972 / ATCC 24843</strain>
    </source>
</reference>